<comment type="catalytic activity">
    <reaction>
        <text>hydrogencarbonate + NH4(+) + ATP = carbamoyl phosphate + ADP + H2O + H(+)</text>
        <dbReference type="Rhea" id="RHEA:10152"/>
        <dbReference type="ChEBI" id="CHEBI:15377"/>
        <dbReference type="ChEBI" id="CHEBI:15378"/>
        <dbReference type="ChEBI" id="CHEBI:17544"/>
        <dbReference type="ChEBI" id="CHEBI:28938"/>
        <dbReference type="ChEBI" id="CHEBI:30616"/>
        <dbReference type="ChEBI" id="CHEBI:58228"/>
        <dbReference type="ChEBI" id="CHEBI:456216"/>
        <dbReference type="EC" id="2.7.2.2"/>
    </reaction>
</comment>
<comment type="pathway">
    <text>Metabolic intermediate metabolism; carbamoyl phosphate degradation; CO(2) and NH(3) from carbamoyl phosphate: step 1/1.</text>
</comment>
<comment type="subcellular location">
    <subcellularLocation>
        <location evidence="1">Cytoplasm</location>
    </subcellularLocation>
</comment>
<comment type="similarity">
    <text evidence="1">Belongs to the carbamate kinase family.</text>
</comment>
<organism>
    <name type="scientific">Staphylococcus aureus (strain MW2)</name>
    <dbReference type="NCBI Taxonomy" id="196620"/>
    <lineage>
        <taxon>Bacteria</taxon>
        <taxon>Bacillati</taxon>
        <taxon>Bacillota</taxon>
        <taxon>Bacilli</taxon>
        <taxon>Bacillales</taxon>
        <taxon>Staphylococcaceae</taxon>
        <taxon>Staphylococcus</taxon>
    </lineage>
</organism>
<feature type="chain" id="PRO_0000269238" description="Carbamate kinase 1">
    <location>
        <begin position="1"/>
        <end position="310"/>
    </location>
</feature>
<gene>
    <name type="primary">arcC1</name>
    <name type="ordered locus">MW1051</name>
</gene>
<evidence type="ECO:0000305" key="1"/>
<proteinExistence type="inferred from homology"/>
<dbReference type="EC" id="2.7.2.2"/>
<dbReference type="EMBL" id="BA000033">
    <property type="protein sequence ID" value="BAB94916.1"/>
    <property type="molecule type" value="Genomic_DNA"/>
</dbReference>
<dbReference type="SMR" id="Q7A138"/>
<dbReference type="KEGG" id="sam:MW1051"/>
<dbReference type="HOGENOM" id="CLU_076278_0_0_9"/>
<dbReference type="UniPathway" id="UPA00996">
    <property type="reaction ID" value="UER00366"/>
</dbReference>
<dbReference type="GO" id="GO:0005829">
    <property type="term" value="C:cytosol"/>
    <property type="evidence" value="ECO:0007669"/>
    <property type="project" value="TreeGrafter"/>
</dbReference>
<dbReference type="GO" id="GO:0005524">
    <property type="term" value="F:ATP binding"/>
    <property type="evidence" value="ECO:0007669"/>
    <property type="project" value="UniProtKB-KW"/>
</dbReference>
<dbReference type="GO" id="GO:0008804">
    <property type="term" value="F:carbamate kinase activity"/>
    <property type="evidence" value="ECO:0007669"/>
    <property type="project" value="UniProtKB-EC"/>
</dbReference>
<dbReference type="GO" id="GO:0019546">
    <property type="term" value="P:arginine deiminase pathway"/>
    <property type="evidence" value="ECO:0007669"/>
    <property type="project" value="TreeGrafter"/>
</dbReference>
<dbReference type="CDD" id="cd04235">
    <property type="entry name" value="AAK_CK"/>
    <property type="match status" value="1"/>
</dbReference>
<dbReference type="FunFam" id="3.40.1160.10:FF:000007">
    <property type="entry name" value="Carbamate kinase"/>
    <property type="match status" value="1"/>
</dbReference>
<dbReference type="Gene3D" id="3.40.1160.10">
    <property type="entry name" value="Acetylglutamate kinase-like"/>
    <property type="match status" value="1"/>
</dbReference>
<dbReference type="InterPro" id="IPR036393">
    <property type="entry name" value="AceGlu_kinase-like_sf"/>
</dbReference>
<dbReference type="InterPro" id="IPR001048">
    <property type="entry name" value="Asp/Glu/Uridylate_kinase"/>
</dbReference>
<dbReference type="InterPro" id="IPR003964">
    <property type="entry name" value="Carb_kinase"/>
</dbReference>
<dbReference type="NCBIfam" id="TIGR00746">
    <property type="entry name" value="arcC"/>
    <property type="match status" value="1"/>
</dbReference>
<dbReference type="NCBIfam" id="NF009007">
    <property type="entry name" value="PRK12352.1"/>
    <property type="match status" value="1"/>
</dbReference>
<dbReference type="PANTHER" id="PTHR30409">
    <property type="entry name" value="CARBAMATE KINASE"/>
    <property type="match status" value="1"/>
</dbReference>
<dbReference type="PANTHER" id="PTHR30409:SF1">
    <property type="entry name" value="CARBAMATE KINASE-RELATED"/>
    <property type="match status" value="1"/>
</dbReference>
<dbReference type="Pfam" id="PF00696">
    <property type="entry name" value="AA_kinase"/>
    <property type="match status" value="1"/>
</dbReference>
<dbReference type="PIRSF" id="PIRSF000723">
    <property type="entry name" value="Carbamate_kin"/>
    <property type="match status" value="1"/>
</dbReference>
<dbReference type="PRINTS" id="PR01469">
    <property type="entry name" value="CARBMTKINASE"/>
</dbReference>
<dbReference type="SUPFAM" id="SSF53633">
    <property type="entry name" value="Carbamate kinase-like"/>
    <property type="match status" value="1"/>
</dbReference>
<accession>Q7A138</accession>
<reference key="1">
    <citation type="journal article" date="2002" name="Lancet">
        <title>Genome and virulence determinants of high virulence community-acquired MRSA.</title>
        <authorList>
            <person name="Baba T."/>
            <person name="Takeuchi F."/>
            <person name="Kuroda M."/>
            <person name="Yuzawa H."/>
            <person name="Aoki K."/>
            <person name="Oguchi A."/>
            <person name="Nagai Y."/>
            <person name="Iwama N."/>
            <person name="Asano K."/>
            <person name="Naimi T."/>
            <person name="Kuroda H."/>
            <person name="Cui L."/>
            <person name="Yamamoto K."/>
            <person name="Hiramatsu K."/>
        </authorList>
    </citation>
    <scope>NUCLEOTIDE SEQUENCE [LARGE SCALE GENOMIC DNA]</scope>
    <source>
        <strain>MW2</strain>
    </source>
</reference>
<sequence>MAKIVVALGGNALGKSPQEQLELVKNTAKSLVGLITKGHEIVISHGNGPQVGSINLGLNYAAEHNQGPAFPFAECGAMSQAYIGYQLQESLQNELHSIGMDKQVVTLVTQVEVDENDPAFNNPSKPIGLFYNKEEAEQIQKEKGFIFVEDAGRGYRRVVPSPQPISIIELESIKTLIKNDTLVIAAGGGGIPVIREQHDGFKGIDAVIDKDKTSALLGANIQCDQLIILTAIDYVYINFNTENQQPLKTTNVDELKRYIDENQFAKGSMLPKIEAAISFIENNPKGSVLITSLNELDAALEGKVGTVIKK</sequence>
<name>ARCC1_STAAW</name>
<protein>
    <recommendedName>
        <fullName>Carbamate kinase 1</fullName>
        <ecNumber>2.7.2.2</ecNumber>
    </recommendedName>
</protein>
<keyword id="KW-0056">Arginine metabolism</keyword>
<keyword id="KW-0067">ATP-binding</keyword>
<keyword id="KW-0963">Cytoplasm</keyword>
<keyword id="KW-0418">Kinase</keyword>
<keyword id="KW-0547">Nucleotide-binding</keyword>
<keyword id="KW-0808">Transferase</keyword>